<reference key="1">
    <citation type="journal article" date="1991" name="J. Virol.">
        <title>Evolution of influenza A virus nucleoprotein genes: implications for the origins of H1N1 human and classical swine viruses.</title>
        <authorList>
            <person name="Gorman O.T."/>
            <person name="Bean W.J."/>
            <person name="Kawaoka Y."/>
            <person name="Donatelli I."/>
            <person name="Guo Y."/>
            <person name="Webster R.G."/>
        </authorList>
    </citation>
    <scope>NUCLEOTIDE SEQUENCE [GENOMIC RNA]</scope>
</reference>
<organismHost>
    <name type="scientific">Aves</name>
    <dbReference type="NCBI Taxonomy" id="8782"/>
</organismHost>
<organismHost>
    <name type="scientific">Equus caballus</name>
    <name type="common">Horse</name>
    <dbReference type="NCBI Taxonomy" id="9796"/>
</organismHost>
<organismHost>
    <name type="scientific">Homo sapiens</name>
    <name type="common">Human</name>
    <dbReference type="NCBI Taxonomy" id="9606"/>
</organismHost>
<organismHost>
    <name type="scientific">Phocidae</name>
    <name type="common">true seals</name>
    <dbReference type="NCBI Taxonomy" id="9709"/>
</organismHost>
<proteinExistence type="inferred from homology"/>
<keyword id="KW-0167">Capsid protein</keyword>
<keyword id="KW-1139">Helical capsid protein</keyword>
<keyword id="KW-1048">Host nucleus</keyword>
<keyword id="KW-0945">Host-virus interaction</keyword>
<keyword id="KW-0687">Ribonucleoprotein</keyword>
<keyword id="KW-0694">RNA-binding</keyword>
<keyword id="KW-0543">Viral nucleoprotein</keyword>
<keyword id="KW-1163">Viral penetration into host nucleus</keyword>
<keyword id="KW-0946">Virion</keyword>
<keyword id="KW-1160">Virus entry into host cell</keyword>
<dbReference type="EMBL" id="M63784">
    <property type="protein sequence ID" value="AAA52245.1"/>
    <property type="molecule type" value="Genomic_RNA"/>
</dbReference>
<dbReference type="SMR" id="P26066"/>
<dbReference type="GO" id="GO:0019029">
    <property type="term" value="C:helical viral capsid"/>
    <property type="evidence" value="ECO:0007669"/>
    <property type="project" value="UniProtKB-UniRule"/>
</dbReference>
<dbReference type="GO" id="GO:0043657">
    <property type="term" value="C:host cell"/>
    <property type="evidence" value="ECO:0007669"/>
    <property type="project" value="GOC"/>
</dbReference>
<dbReference type="GO" id="GO:0042025">
    <property type="term" value="C:host cell nucleus"/>
    <property type="evidence" value="ECO:0007669"/>
    <property type="project" value="UniProtKB-SubCell"/>
</dbReference>
<dbReference type="GO" id="GO:1990904">
    <property type="term" value="C:ribonucleoprotein complex"/>
    <property type="evidence" value="ECO:0007669"/>
    <property type="project" value="UniProtKB-KW"/>
</dbReference>
<dbReference type="GO" id="GO:0019013">
    <property type="term" value="C:viral nucleocapsid"/>
    <property type="evidence" value="ECO:0007669"/>
    <property type="project" value="UniProtKB-UniRule"/>
</dbReference>
<dbReference type="GO" id="GO:0003723">
    <property type="term" value="F:RNA binding"/>
    <property type="evidence" value="ECO:0007669"/>
    <property type="project" value="UniProtKB-UniRule"/>
</dbReference>
<dbReference type="GO" id="GO:0005198">
    <property type="term" value="F:structural molecule activity"/>
    <property type="evidence" value="ECO:0007669"/>
    <property type="project" value="UniProtKB-UniRule"/>
</dbReference>
<dbReference type="GO" id="GO:0046718">
    <property type="term" value="P:symbiont entry into host cell"/>
    <property type="evidence" value="ECO:0007669"/>
    <property type="project" value="UniProtKB-KW"/>
</dbReference>
<dbReference type="GO" id="GO:0075732">
    <property type="term" value="P:viral penetration into host nucleus"/>
    <property type="evidence" value="ECO:0007669"/>
    <property type="project" value="UniProtKB-UniRule"/>
</dbReference>
<dbReference type="HAMAP" id="MF_04070">
    <property type="entry name" value="INFV_NCAP"/>
    <property type="match status" value="1"/>
</dbReference>
<dbReference type="InterPro" id="IPR002141">
    <property type="entry name" value="Flu_NP"/>
</dbReference>
<dbReference type="Pfam" id="PF00506">
    <property type="entry name" value="Flu_NP"/>
    <property type="match status" value="1"/>
</dbReference>
<dbReference type="SUPFAM" id="SSF161003">
    <property type="entry name" value="flu NP-like"/>
    <property type="match status" value="1"/>
</dbReference>
<feature type="chain" id="PRO_0000079101" description="Nucleoprotein">
    <location>
        <begin position="1"/>
        <end position="498"/>
    </location>
</feature>
<feature type="region of interest" description="Disordered" evidence="2">
    <location>
        <begin position="1"/>
        <end position="21"/>
    </location>
</feature>
<feature type="short sequence motif" description="Unconventional nuclear localization signal" evidence="1">
    <location>
        <begin position="1"/>
        <end position="18"/>
    </location>
</feature>
<feature type="short sequence motif" description="Bipartite nuclear localization signal" evidence="1">
    <location>
        <begin position="198"/>
        <end position="216"/>
    </location>
</feature>
<gene>
    <name evidence="1" type="primary">NP</name>
</gene>
<comment type="function">
    <text evidence="1">Encapsidates the negative strand viral RNA, protecting it from nucleases. The encapsidated genomic RNA is termed the ribonucleoprotein (RNP) and serves as template for transcription and replication. The RNP needs to be localized in the host nucleus to start an infectious cycle, but is too large to diffuse through the nuclear pore complex. NP comprises at least 2 nuclear localization signals that are responsible for the active RNP import into the nucleus through cellular importin alpha/beta pathway. Later in the infection, nclear export of RNPs are mediated through viral proteins NEP interacting with M1 which binds nucleoproteins. It is possible that nucleoprotein binds directly host exportin-1/XPO1 and plays an active role in RNPs nuclear export. M1 interaction with RNP seems to hide nucleoprotein's nuclear localization signals. Soon after a virion infects a new cell, M1 dissociates from the RNP under acidification of the virion driven by M2 protein. Dissociation of M1 from RNP unmasks nucleoprotein's nuclear localization signals, targeting the RNP to the nucleus.</text>
</comment>
<comment type="subunit">
    <text evidence="1">Homomultimerizes to form the nucleocapsid. May bind host exportin-1/XPO1. Binds to viral genomic RNA. Protein-RNA contacts are mediated by a combination of electrostatic interactions between positively charged residues and the phosphate backbone and planar interactions between aromatic side chains and bases.</text>
</comment>
<comment type="subcellular location">
    <subcellularLocation>
        <location evidence="1">Virion</location>
    </subcellularLocation>
    <subcellularLocation>
        <location evidence="1">Host nucleus</location>
    </subcellularLocation>
</comment>
<comment type="PTM">
    <text evidence="1">Late in virus-infected cells, may be cleaved from a 56-kDa protein to a 53-kDa protein by a cellular caspase. This cleavage might be a marker for the onset of apoptosis in infected cells or have a specific function in virus host interaction.</text>
</comment>
<comment type="similarity">
    <text evidence="1">Belongs to the influenza viruses nucleoprotein family.</text>
</comment>
<accession>P26066</accession>
<sequence length="498" mass="56258">MASQGTKRSYEQMETGGERQNATEIRASVGRMVGGIGRFYIQMCTELKLSDYEGRLIQNSMTIERMVLSAFDERRNKYLEEHPSAGKDPKKTGGPIYRRRDGKWIRELILYDKEEIRRTWRQANNGEDATAGLTHLMIWHSNLNDATYQRTRALVRTGMDPRMCSLMQGSTLPRRSGAAGAAVKGVGTMVMELVRMIKRGINDRNFWRGENGRRTRIAYERMCNILKGKFQTAAQRAMMDQVRESRNPGNAEIEDLIFLARSALILRGSVAHKSCLPACVYGLAVASGYDFEREGYSLVGIDPFRLLQNSQVFSLIRPNENPAHKSQLVWMACHSAAFEDLRVSSFIRGTRVVPRGQLSTRGVQIASNENMETMDSSTLELRSRYWAIRTRSGGNTNQQRASAGQISVQPTFSVQRNLPFERATIMAAFTGNTEGRTSDMRTEIIRMMESARPEDVSFQGRGVFELSDEKATNPIVPSFDMSNEGSYFFGDNAEEYDN</sequence>
<protein>
    <recommendedName>
        <fullName evidence="1">Nucleoprotein</fullName>
    </recommendedName>
    <alternativeName>
        <fullName evidence="1">Nucleocapsid protein</fullName>
        <shortName evidence="1">Protein N</shortName>
    </alternativeName>
</protein>
<organism>
    <name type="scientific">Influenza A virus (strain A/Teal/Iceland/29/1980 H7N7)</name>
    <dbReference type="NCBI Taxonomy" id="383546"/>
    <lineage>
        <taxon>Viruses</taxon>
        <taxon>Riboviria</taxon>
        <taxon>Orthornavirae</taxon>
        <taxon>Negarnaviricota</taxon>
        <taxon>Polyploviricotina</taxon>
        <taxon>Insthoviricetes</taxon>
        <taxon>Articulavirales</taxon>
        <taxon>Orthomyxoviridae</taxon>
        <taxon>Alphainfluenzavirus</taxon>
        <taxon>Alphainfluenzavirus influenzae</taxon>
        <taxon>Influenza A virus</taxon>
    </lineage>
</organism>
<evidence type="ECO:0000255" key="1">
    <source>
        <dbReference type="HAMAP-Rule" id="MF_04070"/>
    </source>
</evidence>
<evidence type="ECO:0000256" key="2">
    <source>
        <dbReference type="SAM" id="MobiDB-lite"/>
    </source>
</evidence>
<name>NCAP_I80A5</name>